<keyword id="KW-0027">Amidation</keyword>
<keyword id="KW-0903">Direct protein sequencing</keyword>
<keyword id="KW-0527">Neuropeptide</keyword>
<keyword id="KW-0964">Secreted</keyword>
<sequence length="8" mass="928">DPPFSPRL</sequence>
<name>PPK3_STRNA</name>
<comment type="function">
    <text evidence="1">Myoactive.</text>
</comment>
<comment type="subcellular location">
    <subcellularLocation>
        <location evidence="6">Secreted</location>
    </subcellularLocation>
</comment>
<comment type="similarity">
    <text evidence="2">Belongs to the pyrokinin family.</text>
</comment>
<organism>
    <name type="scientific">Striatophasma naukluftense</name>
    <name type="common">Gladiator</name>
    <name type="synonym">Heel-walker</name>
    <dbReference type="NCBI Taxonomy" id="1041429"/>
    <lineage>
        <taxon>Eukaryota</taxon>
        <taxon>Metazoa</taxon>
        <taxon>Ecdysozoa</taxon>
        <taxon>Arthropoda</taxon>
        <taxon>Hexapoda</taxon>
        <taxon>Insecta</taxon>
        <taxon>Pterygota</taxon>
        <taxon>Neoptera</taxon>
        <taxon>Polyneoptera</taxon>
        <taxon>Mantophasmatodea</taxon>
        <taxon>Austrophasmatidae</taxon>
        <taxon>Striatophasma</taxon>
    </lineage>
</organism>
<evidence type="ECO:0000250" key="1">
    <source>
        <dbReference type="UniProtKB" id="P82619"/>
    </source>
</evidence>
<evidence type="ECO:0000255" key="2"/>
<evidence type="ECO:0000269" key="3">
    <source>
    </source>
</evidence>
<evidence type="ECO:0000303" key="4">
    <source>
    </source>
</evidence>
<evidence type="ECO:0000305" key="5"/>
<evidence type="ECO:0000305" key="6">
    <source>
    </source>
</evidence>
<proteinExistence type="evidence at protein level"/>
<feature type="peptide" id="PRO_0000420752" description="Pyrokinin-3" evidence="3">
    <location>
        <begin position="1"/>
        <end position="8"/>
    </location>
</feature>
<feature type="modified residue" description="Leucine amide" evidence="3">
    <location>
        <position position="8"/>
    </location>
</feature>
<reference evidence="5" key="1">
    <citation type="journal article" date="2012" name="Syst. Biol.">
        <title>Peptidomics-based phylogeny and biogeography of Mantophasmatodea (Hexapoda).</title>
        <authorList>
            <person name="Predel R."/>
            <person name="Neupert S."/>
            <person name="Huetteroth W."/>
            <person name="Kahnt J."/>
            <person name="Waidelich D."/>
            <person name="Roth S."/>
        </authorList>
    </citation>
    <scope>PROTEIN SEQUENCE</scope>
    <scope>AMIDATION AT LEU-8</scope>
    <source>
        <tissue evidence="3">Corpora cardiaca</tissue>
    </source>
</reference>
<dbReference type="GO" id="GO:0005576">
    <property type="term" value="C:extracellular region"/>
    <property type="evidence" value="ECO:0007669"/>
    <property type="project" value="UniProtKB-SubCell"/>
</dbReference>
<dbReference type="GO" id="GO:0007218">
    <property type="term" value="P:neuropeptide signaling pathway"/>
    <property type="evidence" value="ECO:0007669"/>
    <property type="project" value="UniProtKB-KW"/>
</dbReference>
<dbReference type="PROSITE" id="PS00539">
    <property type="entry name" value="PYROKININ"/>
    <property type="match status" value="1"/>
</dbReference>
<accession>B0M3B9</accession>
<protein>
    <recommendedName>
        <fullName evidence="4">Pyrokinin-3</fullName>
        <shortName evidence="4">PK-3</shortName>
    </recommendedName>
    <alternativeName>
        <fullName evidence="1">FXPRL-amide</fullName>
    </alternativeName>
</protein>